<keyword id="KW-0963">Cytoplasm</keyword>
<keyword id="KW-0227">DNA damage</keyword>
<keyword id="KW-0233">DNA recombination</keyword>
<keyword id="KW-0234">DNA repair</keyword>
<keyword id="KW-0238">DNA-binding</keyword>
<keyword id="KW-0255">Endonuclease</keyword>
<keyword id="KW-0378">Hydrolase</keyword>
<keyword id="KW-0460">Magnesium</keyword>
<keyword id="KW-0479">Metal-binding</keyword>
<keyword id="KW-0540">Nuclease</keyword>
<protein>
    <recommendedName>
        <fullName evidence="1">Crossover junction endodeoxyribonuclease RuvC</fullName>
        <ecNumber evidence="1">3.1.21.10</ecNumber>
    </recommendedName>
    <alternativeName>
        <fullName evidence="1">Holliday junction nuclease RuvC</fullName>
    </alternativeName>
    <alternativeName>
        <fullName evidence="1">Holliday junction resolvase RuvC</fullName>
    </alternativeName>
</protein>
<name>RUVC_BURP6</name>
<organism>
    <name type="scientific">Burkholderia pseudomallei (strain 668)</name>
    <dbReference type="NCBI Taxonomy" id="320373"/>
    <lineage>
        <taxon>Bacteria</taxon>
        <taxon>Pseudomonadati</taxon>
        <taxon>Pseudomonadota</taxon>
        <taxon>Betaproteobacteria</taxon>
        <taxon>Burkholderiales</taxon>
        <taxon>Burkholderiaceae</taxon>
        <taxon>Burkholderia</taxon>
        <taxon>pseudomallei group</taxon>
    </lineage>
</organism>
<feature type="chain" id="PRO_1000002732" description="Crossover junction endodeoxyribonuclease RuvC">
    <location>
        <begin position="1"/>
        <end position="180"/>
    </location>
</feature>
<feature type="active site" evidence="1">
    <location>
        <position position="7"/>
    </location>
</feature>
<feature type="active site" evidence="1">
    <location>
        <position position="66"/>
    </location>
</feature>
<feature type="active site" evidence="1">
    <location>
        <position position="138"/>
    </location>
</feature>
<feature type="binding site" evidence="1">
    <location>
        <position position="7"/>
    </location>
    <ligand>
        <name>Mg(2+)</name>
        <dbReference type="ChEBI" id="CHEBI:18420"/>
        <label>1</label>
    </ligand>
</feature>
<feature type="binding site" evidence="1">
    <location>
        <position position="66"/>
    </location>
    <ligand>
        <name>Mg(2+)</name>
        <dbReference type="ChEBI" id="CHEBI:18420"/>
        <label>2</label>
    </ligand>
</feature>
<feature type="binding site" evidence="1">
    <location>
        <position position="138"/>
    </location>
    <ligand>
        <name>Mg(2+)</name>
        <dbReference type="ChEBI" id="CHEBI:18420"/>
        <label>1</label>
    </ligand>
</feature>
<comment type="function">
    <text evidence="1">The RuvA-RuvB-RuvC complex processes Holliday junction (HJ) DNA during genetic recombination and DNA repair. Endonuclease that resolves HJ intermediates. Cleaves cruciform DNA by making single-stranded nicks across the HJ at symmetrical positions within the homologous arms, yielding a 5'-phosphate and a 3'-hydroxyl group; requires a central core of homology in the junction. The consensus cleavage sequence is 5'-(A/T)TT(C/G)-3'. Cleavage occurs on the 3'-side of the TT dinucleotide at the point of strand exchange. HJ branch migration catalyzed by RuvA-RuvB allows RuvC to scan DNA until it finds its consensus sequence, where it cleaves and resolves the cruciform DNA.</text>
</comment>
<comment type="catalytic activity">
    <reaction evidence="1">
        <text>Endonucleolytic cleavage at a junction such as a reciprocal single-stranded crossover between two homologous DNA duplexes (Holliday junction).</text>
        <dbReference type="EC" id="3.1.21.10"/>
    </reaction>
</comment>
<comment type="cofactor">
    <cofactor evidence="1">
        <name>Mg(2+)</name>
        <dbReference type="ChEBI" id="CHEBI:18420"/>
    </cofactor>
    <text evidence="1">Binds 2 Mg(2+) ion per subunit.</text>
</comment>
<comment type="subunit">
    <text evidence="1">Homodimer which binds Holliday junction (HJ) DNA. The HJ becomes 2-fold symmetrical on binding to RuvC with unstacked arms; it has a different conformation from HJ DNA in complex with RuvA. In the full resolvosome a probable DNA-RuvA(4)-RuvB(12)-RuvC(2) complex forms which resolves the HJ.</text>
</comment>
<comment type="subcellular location">
    <subcellularLocation>
        <location evidence="1">Cytoplasm</location>
    </subcellularLocation>
</comment>
<comment type="similarity">
    <text evidence="1">Belongs to the RuvC family.</text>
</comment>
<accession>A3NDF4</accession>
<reference key="1">
    <citation type="journal article" date="2010" name="Genome Biol. Evol.">
        <title>Continuing evolution of Burkholderia mallei through genome reduction and large-scale rearrangements.</title>
        <authorList>
            <person name="Losada L."/>
            <person name="Ronning C.M."/>
            <person name="DeShazer D."/>
            <person name="Woods D."/>
            <person name="Fedorova N."/>
            <person name="Kim H.S."/>
            <person name="Shabalina S.A."/>
            <person name="Pearson T.R."/>
            <person name="Brinkac L."/>
            <person name="Tan P."/>
            <person name="Nandi T."/>
            <person name="Crabtree J."/>
            <person name="Badger J."/>
            <person name="Beckstrom-Sternberg S."/>
            <person name="Saqib M."/>
            <person name="Schutzer S.E."/>
            <person name="Keim P."/>
            <person name="Nierman W.C."/>
        </authorList>
    </citation>
    <scope>NUCLEOTIDE SEQUENCE [LARGE SCALE GENOMIC DNA]</scope>
    <source>
        <strain>668</strain>
    </source>
</reference>
<evidence type="ECO:0000255" key="1">
    <source>
        <dbReference type="HAMAP-Rule" id="MF_00034"/>
    </source>
</evidence>
<proteinExistence type="inferred from homology"/>
<sequence>MRILGIDPGLRVTGFGVIDVSGHQLAYVASGVIKTPTADLPTRLGTIYDGVSTLIREHTPDQAAIEKVFVNVNPQSTLLLGQARGAAICGLVSGGLPVAEYTALQLKQAVVGYGRATKEQMQEMVAQLLSLSGRPGTDAADALGMAICHAHGGNTLNTLGGIAPALAKKGLRVRRGRLVG</sequence>
<dbReference type="EC" id="3.1.21.10" evidence="1"/>
<dbReference type="EMBL" id="CP000570">
    <property type="protein sequence ID" value="ABN82330.1"/>
    <property type="molecule type" value="Genomic_DNA"/>
</dbReference>
<dbReference type="RefSeq" id="WP_011852190.1">
    <property type="nucleotide sequence ID" value="NC_009074.1"/>
</dbReference>
<dbReference type="SMR" id="A3NDF4"/>
<dbReference type="KEGG" id="bpd:BURPS668_3364"/>
<dbReference type="HOGENOM" id="CLU_091257_2_0_4"/>
<dbReference type="GO" id="GO:0005737">
    <property type="term" value="C:cytoplasm"/>
    <property type="evidence" value="ECO:0007669"/>
    <property type="project" value="UniProtKB-SubCell"/>
</dbReference>
<dbReference type="GO" id="GO:0048476">
    <property type="term" value="C:Holliday junction resolvase complex"/>
    <property type="evidence" value="ECO:0007669"/>
    <property type="project" value="UniProtKB-UniRule"/>
</dbReference>
<dbReference type="GO" id="GO:0008821">
    <property type="term" value="F:crossover junction DNA endonuclease activity"/>
    <property type="evidence" value="ECO:0007669"/>
    <property type="project" value="UniProtKB-UniRule"/>
</dbReference>
<dbReference type="GO" id="GO:0003677">
    <property type="term" value="F:DNA binding"/>
    <property type="evidence" value="ECO:0007669"/>
    <property type="project" value="UniProtKB-KW"/>
</dbReference>
<dbReference type="GO" id="GO:0000287">
    <property type="term" value="F:magnesium ion binding"/>
    <property type="evidence" value="ECO:0007669"/>
    <property type="project" value="UniProtKB-UniRule"/>
</dbReference>
<dbReference type="GO" id="GO:0006310">
    <property type="term" value="P:DNA recombination"/>
    <property type="evidence" value="ECO:0007669"/>
    <property type="project" value="UniProtKB-UniRule"/>
</dbReference>
<dbReference type="GO" id="GO:0006281">
    <property type="term" value="P:DNA repair"/>
    <property type="evidence" value="ECO:0007669"/>
    <property type="project" value="UniProtKB-UniRule"/>
</dbReference>
<dbReference type="CDD" id="cd16962">
    <property type="entry name" value="RuvC"/>
    <property type="match status" value="1"/>
</dbReference>
<dbReference type="FunFam" id="3.30.420.10:FF:000002">
    <property type="entry name" value="Crossover junction endodeoxyribonuclease RuvC"/>
    <property type="match status" value="1"/>
</dbReference>
<dbReference type="Gene3D" id="3.30.420.10">
    <property type="entry name" value="Ribonuclease H-like superfamily/Ribonuclease H"/>
    <property type="match status" value="1"/>
</dbReference>
<dbReference type="HAMAP" id="MF_00034">
    <property type="entry name" value="RuvC"/>
    <property type="match status" value="1"/>
</dbReference>
<dbReference type="InterPro" id="IPR012337">
    <property type="entry name" value="RNaseH-like_sf"/>
</dbReference>
<dbReference type="InterPro" id="IPR036397">
    <property type="entry name" value="RNaseH_sf"/>
</dbReference>
<dbReference type="InterPro" id="IPR020563">
    <property type="entry name" value="X-over_junc_endoDNase_Mg_BS"/>
</dbReference>
<dbReference type="InterPro" id="IPR002176">
    <property type="entry name" value="X-over_junc_endoDNase_RuvC"/>
</dbReference>
<dbReference type="NCBIfam" id="TIGR00228">
    <property type="entry name" value="ruvC"/>
    <property type="match status" value="1"/>
</dbReference>
<dbReference type="PANTHER" id="PTHR30194">
    <property type="entry name" value="CROSSOVER JUNCTION ENDODEOXYRIBONUCLEASE RUVC"/>
    <property type="match status" value="1"/>
</dbReference>
<dbReference type="PANTHER" id="PTHR30194:SF3">
    <property type="entry name" value="CROSSOVER JUNCTION ENDODEOXYRIBONUCLEASE RUVC"/>
    <property type="match status" value="1"/>
</dbReference>
<dbReference type="Pfam" id="PF02075">
    <property type="entry name" value="RuvC"/>
    <property type="match status" value="1"/>
</dbReference>
<dbReference type="PRINTS" id="PR00696">
    <property type="entry name" value="RSOLVASERUVC"/>
</dbReference>
<dbReference type="SUPFAM" id="SSF53098">
    <property type="entry name" value="Ribonuclease H-like"/>
    <property type="match status" value="1"/>
</dbReference>
<dbReference type="PROSITE" id="PS01321">
    <property type="entry name" value="RUVC"/>
    <property type="match status" value="1"/>
</dbReference>
<gene>
    <name evidence="1" type="primary">ruvC</name>
    <name type="ordered locus">BURPS668_3364</name>
</gene>